<proteinExistence type="evidence at transcript level"/>
<sequence length="363" mass="37651">MQLLQSSVIAATVGAALVAAVPVELKARDSCTFTSAADAKSGKTSCSTITLSNIEVPAGETLDLTGLNDGTTVIFSGETTFGYKEWEGPLISVSGTNIKVQQASGAKIDGDGSRWWDGKGGNGGKTKPKFFYAHKLDSSSITGLQIYNTPVQGFSIQSDNLNITDVTIDNSAGTAEGHNTDAFDVGSSTYINIDGATVYNQDDCLAINSGSHITFTNGYCDGGHGLSIGSVGGRSDNTVEDVTISNSKVVNSQNGVRIKTVYDATGTVSNVKFEDITLSGITKYGLIVEQDYENGSPTGTPTNGIKVSDITFDKVTGTVESDATDIYILCGSGSCTDWTWSGVSITGGKTSSKCENVSTGASC</sequence>
<accession>P35335</accession>
<accession>A4L7I0</accession>
<accession>Q2UI78</accession>
<comment type="function">
    <text evidence="4">Involved in maceration and soft-rotting of plant tissue. Hydrolyzes the 1,4-alpha glycosidic bonds of de-esterified pectate in the smooth region of the plant cell wall.</text>
</comment>
<comment type="catalytic activity">
    <reaction>
        <text>(1,4-alpha-D-galacturonosyl)n+m + H2O = (1,4-alpha-D-galacturonosyl)n + (1,4-alpha-D-galacturonosyl)m.</text>
        <dbReference type="EC" id="3.2.1.15"/>
    </reaction>
</comment>
<comment type="subcellular location">
    <subcellularLocation>
        <location evidence="5">Secreted</location>
    </subcellularLocation>
</comment>
<comment type="similarity">
    <text evidence="5">Belongs to the glycosyl hydrolase 28 family.</text>
</comment>
<gene>
    <name type="primary">pgaB</name>
    <name type="synonym">pecB</name>
    <name type="ORF">AO090023000161</name>
</gene>
<name>PGLRB_ASPOR</name>
<protein>
    <recommendedName>
        <fullName>Endopolygalacturonase B</fullName>
        <ecNumber>3.2.1.15</ecNumber>
    </recommendedName>
    <alternativeName>
        <fullName>Pectinase B</fullName>
    </alternativeName>
    <alternativeName>
        <fullName>Polygalacturonase B</fullName>
    </alternativeName>
</protein>
<keyword id="KW-0961">Cell wall biogenesis/degradation</keyword>
<keyword id="KW-1015">Disulfide bond</keyword>
<keyword id="KW-0325">Glycoprotein</keyword>
<keyword id="KW-0326">Glycosidase</keyword>
<keyword id="KW-0378">Hydrolase</keyword>
<keyword id="KW-1185">Reference proteome</keyword>
<keyword id="KW-0677">Repeat</keyword>
<keyword id="KW-0964">Secreted</keyword>
<keyword id="KW-0732">Signal</keyword>
<keyword id="KW-0865">Zymogen</keyword>
<reference key="1">
    <citation type="journal article" date="1993" name="FEMS Microbiol. Lett.">
        <title>Structural features of a polygalacturonase gene cloned from Aspergillus oryzae KBN616.</title>
        <authorList>
            <person name="Kitamoto N."/>
            <person name="Kimura T."/>
            <person name="Kito Y."/>
            <person name="Ohmiya K."/>
            <person name="Tsukagoshi N."/>
        </authorList>
    </citation>
    <scope>NUCLEOTIDE SEQUENCE [GENOMIC DNA]</scope>
    <source>
        <strain>KBN616</strain>
    </source>
</reference>
<reference key="2">
    <citation type="submission" date="2011-05" db="EMBL/GenBank/DDBJ databases">
        <authorList>
            <person name="Kitamoto N."/>
        </authorList>
    </citation>
    <scope>SEQUENCE REVISION TO 337-338</scope>
</reference>
<reference key="3">
    <citation type="journal article" date="2005" name="Nature">
        <title>Genome sequencing and analysis of Aspergillus oryzae.</title>
        <authorList>
            <person name="Machida M."/>
            <person name="Asai K."/>
            <person name="Sano M."/>
            <person name="Tanaka T."/>
            <person name="Kumagai T."/>
            <person name="Terai G."/>
            <person name="Kusumoto K."/>
            <person name="Arima T."/>
            <person name="Akita O."/>
            <person name="Kashiwagi Y."/>
            <person name="Abe K."/>
            <person name="Gomi K."/>
            <person name="Horiuchi H."/>
            <person name="Kitamoto K."/>
            <person name="Kobayashi T."/>
            <person name="Takeuchi M."/>
            <person name="Denning D.W."/>
            <person name="Galagan J.E."/>
            <person name="Nierman W.C."/>
            <person name="Yu J."/>
            <person name="Archer D.B."/>
            <person name="Bennett J.W."/>
            <person name="Bhatnagar D."/>
            <person name="Cleveland T.E."/>
            <person name="Fedorova N.D."/>
            <person name="Gotoh O."/>
            <person name="Horikawa H."/>
            <person name="Hosoyama A."/>
            <person name="Ichinomiya M."/>
            <person name="Igarashi R."/>
            <person name="Iwashita K."/>
            <person name="Juvvadi P.R."/>
            <person name="Kato M."/>
            <person name="Kato Y."/>
            <person name="Kin T."/>
            <person name="Kokubun A."/>
            <person name="Maeda H."/>
            <person name="Maeyama N."/>
            <person name="Maruyama J."/>
            <person name="Nagasaki H."/>
            <person name="Nakajima T."/>
            <person name="Oda K."/>
            <person name="Okada K."/>
            <person name="Paulsen I."/>
            <person name="Sakamoto K."/>
            <person name="Sawano T."/>
            <person name="Takahashi M."/>
            <person name="Takase K."/>
            <person name="Terabayashi Y."/>
            <person name="Wortman J.R."/>
            <person name="Yamada O."/>
            <person name="Yamagata Y."/>
            <person name="Anazawa H."/>
            <person name="Hata Y."/>
            <person name="Koide Y."/>
            <person name="Komori T."/>
            <person name="Koyama Y."/>
            <person name="Minetoki T."/>
            <person name="Suharnan S."/>
            <person name="Tanaka A."/>
            <person name="Isono K."/>
            <person name="Kuhara S."/>
            <person name="Ogasawara N."/>
            <person name="Kikuchi H."/>
        </authorList>
    </citation>
    <scope>NUCLEOTIDE SEQUENCE [LARGE SCALE GENOMIC DNA]</scope>
    <source>
        <strain>ATCC 42149 / RIB 40</strain>
    </source>
</reference>
<reference key="4">
    <citation type="journal article" date="2008" name="Plant Physiol.">
        <title>Restoration of mature etiolated cucumber hypocotyl cell wall susceptibility to expansin by pretreatment with fungal pectinases and EGTA in vitro.</title>
        <authorList>
            <person name="Zhao Q."/>
            <person name="Yuan S."/>
            <person name="Wang X."/>
            <person name="Zhang Y."/>
            <person name="Zhu H."/>
            <person name="Lu C."/>
        </authorList>
    </citation>
    <scope>NUCLEOTIDE SEQUENCE [MRNA] OF 29-363</scope>
    <scope>FUNCTION</scope>
</reference>
<organism>
    <name type="scientific">Aspergillus oryzae (strain ATCC 42149 / RIB 40)</name>
    <name type="common">Yellow koji mold</name>
    <dbReference type="NCBI Taxonomy" id="510516"/>
    <lineage>
        <taxon>Eukaryota</taxon>
        <taxon>Fungi</taxon>
        <taxon>Dikarya</taxon>
        <taxon>Ascomycota</taxon>
        <taxon>Pezizomycotina</taxon>
        <taxon>Eurotiomycetes</taxon>
        <taxon>Eurotiomycetidae</taxon>
        <taxon>Eurotiales</taxon>
        <taxon>Aspergillaceae</taxon>
        <taxon>Aspergillus</taxon>
        <taxon>Aspergillus subgen. Circumdati</taxon>
    </lineage>
</organism>
<evidence type="ECO:0000250" key="1"/>
<evidence type="ECO:0000255" key="2"/>
<evidence type="ECO:0000255" key="3">
    <source>
        <dbReference type="PROSITE-ProRule" id="PRU10052"/>
    </source>
</evidence>
<evidence type="ECO:0000269" key="4">
    <source>
    </source>
</evidence>
<evidence type="ECO:0000305" key="5"/>
<feature type="signal peptide" evidence="2">
    <location>
        <begin position="1"/>
        <end position="20"/>
    </location>
</feature>
<feature type="propeptide" id="PRO_0000024780" evidence="2">
    <location>
        <begin position="21"/>
        <end position="28"/>
    </location>
</feature>
<feature type="chain" id="PRO_0000024781" description="Endopolygalacturonase B">
    <location>
        <begin position="29"/>
        <end position="363"/>
    </location>
</feature>
<feature type="repeat" description="PbH1 1">
    <location>
        <begin position="158"/>
        <end position="187"/>
    </location>
</feature>
<feature type="repeat" description="PbH1 2">
    <location>
        <begin position="188"/>
        <end position="209"/>
    </location>
</feature>
<feature type="repeat" description="PbH1 3">
    <location>
        <begin position="210"/>
        <end position="230"/>
    </location>
</feature>
<feature type="repeat" description="PbH1 4">
    <location>
        <begin position="239"/>
        <end position="260"/>
    </location>
</feature>
<feature type="repeat" description="PbH1 5">
    <location>
        <begin position="268"/>
        <end position="290"/>
    </location>
</feature>
<feature type="repeat" description="PbH1 6">
    <location>
        <begin position="302"/>
        <end position="347"/>
    </location>
</feature>
<feature type="active site" description="Proton donor" evidence="3">
    <location>
        <position position="202"/>
    </location>
</feature>
<feature type="active site" evidence="3">
    <location>
        <position position="224"/>
    </location>
</feature>
<feature type="glycosylation site" description="N-linked (GlcNAc...) asparagine" evidence="2">
    <location>
        <position position="162"/>
    </location>
</feature>
<feature type="glycosylation site" description="N-linked (GlcNAc...) asparagine" evidence="2">
    <location>
        <position position="356"/>
    </location>
</feature>
<feature type="disulfide bond" evidence="1">
    <location>
        <begin position="31"/>
        <end position="46"/>
    </location>
</feature>
<feature type="disulfide bond" evidence="1">
    <location>
        <begin position="204"/>
        <end position="220"/>
    </location>
</feature>
<feature type="disulfide bond" evidence="1">
    <location>
        <begin position="330"/>
        <end position="335"/>
    </location>
</feature>
<feature type="disulfide bond" evidence="1">
    <location>
        <begin position="354"/>
        <end position="363"/>
    </location>
</feature>
<feature type="sequence conflict" description="In Ref. 4; ABO38858." evidence="5" ref="4">
    <original>S</original>
    <variation>P</variation>
    <location>
        <position position="358"/>
    </location>
</feature>
<dbReference type="EC" id="3.2.1.15"/>
<dbReference type="EMBL" id="D14282">
    <property type="protein sequence ID" value="BAA03244.2"/>
    <property type="molecule type" value="Genomic_DNA"/>
</dbReference>
<dbReference type="EMBL" id="BA000051">
    <property type="protein sequence ID" value="BAE58737.1"/>
    <property type="molecule type" value="Genomic_DNA"/>
</dbReference>
<dbReference type="EMBL" id="EF452420">
    <property type="protein sequence ID" value="ABO38858.1"/>
    <property type="molecule type" value="mRNA"/>
</dbReference>
<dbReference type="RefSeq" id="XP_001820739.1">
    <property type="nucleotide sequence ID" value="XM_001820687.2"/>
</dbReference>
<dbReference type="SMR" id="P35335"/>
<dbReference type="STRING" id="510516.P35335"/>
<dbReference type="CAZy" id="GH28">
    <property type="family name" value="Glycoside Hydrolase Family 28"/>
</dbReference>
<dbReference type="GlyCosmos" id="P35335">
    <property type="glycosylation" value="2 sites, No reported glycans"/>
</dbReference>
<dbReference type="EnsemblFungi" id="BAE58737">
    <property type="protein sequence ID" value="BAE58737"/>
    <property type="gene ID" value="AO090023000161"/>
</dbReference>
<dbReference type="GeneID" id="5992741"/>
<dbReference type="KEGG" id="aor:AO090023000161"/>
<dbReference type="VEuPathDB" id="FungiDB:AO090023000161"/>
<dbReference type="HOGENOM" id="CLU_040116_0_0_1"/>
<dbReference type="OMA" id="GSTIKFM"/>
<dbReference type="OrthoDB" id="96161at5052"/>
<dbReference type="Proteomes" id="UP000006564">
    <property type="component" value="Chromosome 3"/>
</dbReference>
<dbReference type="GO" id="GO:0005576">
    <property type="term" value="C:extracellular region"/>
    <property type="evidence" value="ECO:0000314"/>
    <property type="project" value="UniProtKB"/>
</dbReference>
<dbReference type="GO" id="GO:0047911">
    <property type="term" value="F:galacturan 1,4-alpha-galacturonidase activity"/>
    <property type="evidence" value="ECO:0000314"/>
    <property type="project" value="UniProtKB"/>
</dbReference>
<dbReference type="GO" id="GO:0004650">
    <property type="term" value="F:polygalacturonase activity"/>
    <property type="evidence" value="ECO:0000314"/>
    <property type="project" value="UniProtKB"/>
</dbReference>
<dbReference type="GO" id="GO:0071555">
    <property type="term" value="P:cell wall organization"/>
    <property type="evidence" value="ECO:0007669"/>
    <property type="project" value="UniProtKB-KW"/>
</dbReference>
<dbReference type="GO" id="GO:0045490">
    <property type="term" value="P:pectin catabolic process"/>
    <property type="evidence" value="ECO:0000314"/>
    <property type="project" value="UniProtKB"/>
</dbReference>
<dbReference type="FunFam" id="2.160.20.10:FF:000002">
    <property type="entry name" value="Endopolygalacturonase D"/>
    <property type="match status" value="1"/>
</dbReference>
<dbReference type="Gene3D" id="2.160.20.10">
    <property type="entry name" value="Single-stranded right-handed beta-helix, Pectin lyase-like"/>
    <property type="match status" value="1"/>
</dbReference>
<dbReference type="InterPro" id="IPR000743">
    <property type="entry name" value="Glyco_hydro_28"/>
</dbReference>
<dbReference type="InterPro" id="IPR050434">
    <property type="entry name" value="Glycosyl_hydrlase_28"/>
</dbReference>
<dbReference type="InterPro" id="IPR006626">
    <property type="entry name" value="PbH1"/>
</dbReference>
<dbReference type="InterPro" id="IPR012334">
    <property type="entry name" value="Pectin_lyas_fold"/>
</dbReference>
<dbReference type="InterPro" id="IPR011050">
    <property type="entry name" value="Pectin_lyase_fold/virulence"/>
</dbReference>
<dbReference type="PANTHER" id="PTHR31884:SF13">
    <property type="entry name" value="ENDOPOLYGALACTURONASE B"/>
    <property type="match status" value="1"/>
</dbReference>
<dbReference type="PANTHER" id="PTHR31884">
    <property type="entry name" value="POLYGALACTURONASE"/>
    <property type="match status" value="1"/>
</dbReference>
<dbReference type="Pfam" id="PF00295">
    <property type="entry name" value="Glyco_hydro_28"/>
    <property type="match status" value="1"/>
</dbReference>
<dbReference type="SMART" id="SM00710">
    <property type="entry name" value="PbH1"/>
    <property type="match status" value="6"/>
</dbReference>
<dbReference type="SUPFAM" id="SSF51126">
    <property type="entry name" value="Pectin lyase-like"/>
    <property type="match status" value="1"/>
</dbReference>
<dbReference type="PROSITE" id="PS00502">
    <property type="entry name" value="POLYGALACTURONASE"/>
    <property type="match status" value="1"/>
</dbReference>